<comment type="function">
    <text evidence="1">May facilitate the release of atrial natriuretic peptide by cardiomyocytes and hence play a role in the regulation of arterial pressure.</text>
</comment>
<comment type="catalytic activity">
    <reaction evidence="2">
        <text>GTP + H2O = GDP + phosphate + H(+)</text>
        <dbReference type="Rhea" id="RHEA:19669"/>
        <dbReference type="ChEBI" id="CHEBI:15377"/>
        <dbReference type="ChEBI" id="CHEBI:15378"/>
        <dbReference type="ChEBI" id="CHEBI:37565"/>
        <dbReference type="ChEBI" id="CHEBI:43474"/>
        <dbReference type="ChEBI" id="CHEBI:58189"/>
        <dbReference type="EC" id="3.6.5.2"/>
    </reaction>
</comment>
<comment type="subunit">
    <text evidence="1">Interacts with CADPS.</text>
</comment>
<comment type="interaction">
    <interactant intactId="EBI-3919507">
        <id>Q96S79</id>
    </interactant>
    <interactant intactId="EBI-713568">
        <id>P45984</id>
        <label>MAPK9</label>
    </interactant>
    <organismsDiffer>false</organismsDiffer>
    <experiments>4</experiments>
</comment>
<comment type="subcellular location">
    <subcellularLocation>
        <location evidence="6">Cell membrane</location>
        <topology evidence="6">Lipid-anchor</topology>
        <orientation evidence="6">Cytoplasmic side</orientation>
    </subcellularLocation>
</comment>
<comment type="tissue specificity">
    <text evidence="5">Expressed at high levels in skeletal muscle and, at much lower levels, in heart, brain and pancreas.</text>
</comment>
<comment type="similarity">
    <text evidence="6">Belongs to the small GTPase superfamily. Ras family.</text>
</comment>
<gene>
    <name type="primary">RASL10B</name>
</gene>
<evidence type="ECO:0000250" key="1"/>
<evidence type="ECO:0000250" key="2">
    <source>
        <dbReference type="UniProtKB" id="P01116"/>
    </source>
</evidence>
<evidence type="ECO:0000255" key="3"/>
<evidence type="ECO:0000269" key="4">
    <source>
    </source>
</evidence>
<evidence type="ECO:0000269" key="5">
    <source>
    </source>
</evidence>
<evidence type="ECO:0000305" key="6"/>
<reference key="1">
    <citation type="submission" date="2000-08" db="EMBL/GenBank/DDBJ databases">
        <title>Identification of a new member of GTP-binding protein family by virtual transcribed sequence (VTS) approach.</title>
        <authorList>
            <person name="Hayashi A."/>
            <person name="Sato S."/>
            <person name="Kasama Y."/>
            <person name="Furuya T."/>
            <person name="Miyajima N."/>
            <person name="Saito T."/>
        </authorList>
    </citation>
    <scope>NUCLEOTIDE SEQUENCE [MRNA]</scope>
</reference>
<reference key="2">
    <citation type="journal article" date="2004" name="Nat. Genet.">
        <title>Complete sequencing and characterization of 21,243 full-length human cDNAs.</title>
        <authorList>
            <person name="Ota T."/>
            <person name="Suzuki Y."/>
            <person name="Nishikawa T."/>
            <person name="Otsuki T."/>
            <person name="Sugiyama T."/>
            <person name="Irie R."/>
            <person name="Wakamatsu A."/>
            <person name="Hayashi K."/>
            <person name="Sato H."/>
            <person name="Nagai K."/>
            <person name="Kimura K."/>
            <person name="Makita H."/>
            <person name="Sekine M."/>
            <person name="Obayashi M."/>
            <person name="Nishi T."/>
            <person name="Shibahara T."/>
            <person name="Tanaka T."/>
            <person name="Ishii S."/>
            <person name="Yamamoto J."/>
            <person name="Saito K."/>
            <person name="Kawai Y."/>
            <person name="Isono Y."/>
            <person name="Nakamura Y."/>
            <person name="Nagahari K."/>
            <person name="Murakami K."/>
            <person name="Yasuda T."/>
            <person name="Iwayanagi T."/>
            <person name="Wagatsuma M."/>
            <person name="Shiratori A."/>
            <person name="Sudo H."/>
            <person name="Hosoiri T."/>
            <person name="Kaku Y."/>
            <person name="Kodaira H."/>
            <person name="Kondo H."/>
            <person name="Sugawara M."/>
            <person name="Takahashi M."/>
            <person name="Kanda K."/>
            <person name="Yokoi T."/>
            <person name="Furuya T."/>
            <person name="Kikkawa E."/>
            <person name="Omura Y."/>
            <person name="Abe K."/>
            <person name="Kamihara K."/>
            <person name="Katsuta N."/>
            <person name="Sato K."/>
            <person name="Tanikawa M."/>
            <person name="Yamazaki M."/>
            <person name="Ninomiya K."/>
            <person name="Ishibashi T."/>
            <person name="Yamashita H."/>
            <person name="Murakawa K."/>
            <person name="Fujimori K."/>
            <person name="Tanai H."/>
            <person name="Kimata M."/>
            <person name="Watanabe M."/>
            <person name="Hiraoka S."/>
            <person name="Chiba Y."/>
            <person name="Ishida S."/>
            <person name="Ono Y."/>
            <person name="Takiguchi S."/>
            <person name="Watanabe S."/>
            <person name="Yosida M."/>
            <person name="Hotuta T."/>
            <person name="Kusano J."/>
            <person name="Kanehori K."/>
            <person name="Takahashi-Fujii A."/>
            <person name="Hara H."/>
            <person name="Tanase T.-O."/>
            <person name="Nomura Y."/>
            <person name="Togiya S."/>
            <person name="Komai F."/>
            <person name="Hara R."/>
            <person name="Takeuchi K."/>
            <person name="Arita M."/>
            <person name="Imose N."/>
            <person name="Musashino K."/>
            <person name="Yuuki H."/>
            <person name="Oshima A."/>
            <person name="Sasaki N."/>
            <person name="Aotsuka S."/>
            <person name="Yoshikawa Y."/>
            <person name="Matsunawa H."/>
            <person name="Ichihara T."/>
            <person name="Shiohata N."/>
            <person name="Sano S."/>
            <person name="Moriya S."/>
            <person name="Momiyama H."/>
            <person name="Satoh N."/>
            <person name="Takami S."/>
            <person name="Terashima Y."/>
            <person name="Suzuki O."/>
            <person name="Nakagawa S."/>
            <person name="Senoh A."/>
            <person name="Mizoguchi H."/>
            <person name="Goto Y."/>
            <person name="Shimizu F."/>
            <person name="Wakebe H."/>
            <person name="Hishigaki H."/>
            <person name="Watanabe T."/>
            <person name="Sugiyama A."/>
            <person name="Takemoto M."/>
            <person name="Kawakami B."/>
            <person name="Yamazaki M."/>
            <person name="Watanabe K."/>
            <person name="Kumagai A."/>
            <person name="Itakura S."/>
            <person name="Fukuzumi Y."/>
            <person name="Fujimori Y."/>
            <person name="Komiyama M."/>
            <person name="Tashiro H."/>
            <person name="Tanigami A."/>
            <person name="Fujiwara T."/>
            <person name="Ono T."/>
            <person name="Yamada K."/>
            <person name="Fujii Y."/>
            <person name="Ozaki K."/>
            <person name="Hirao M."/>
            <person name="Ohmori Y."/>
            <person name="Kawabata A."/>
            <person name="Hikiji T."/>
            <person name="Kobatake N."/>
            <person name="Inagaki H."/>
            <person name="Ikema Y."/>
            <person name="Okamoto S."/>
            <person name="Okitani R."/>
            <person name="Kawakami T."/>
            <person name="Noguchi S."/>
            <person name="Itoh T."/>
            <person name="Shigeta K."/>
            <person name="Senba T."/>
            <person name="Matsumura K."/>
            <person name="Nakajima Y."/>
            <person name="Mizuno T."/>
            <person name="Morinaga M."/>
            <person name="Sasaki M."/>
            <person name="Togashi T."/>
            <person name="Oyama M."/>
            <person name="Hata H."/>
            <person name="Watanabe M."/>
            <person name="Komatsu T."/>
            <person name="Mizushima-Sugano J."/>
            <person name="Satoh T."/>
            <person name="Shirai Y."/>
            <person name="Takahashi Y."/>
            <person name="Nakagawa K."/>
            <person name="Okumura K."/>
            <person name="Nagase T."/>
            <person name="Nomura N."/>
            <person name="Kikuchi H."/>
            <person name="Masuho Y."/>
            <person name="Yamashita R."/>
            <person name="Nakai K."/>
            <person name="Yada T."/>
            <person name="Nakamura Y."/>
            <person name="Ohara O."/>
            <person name="Isogai T."/>
            <person name="Sugano S."/>
        </authorList>
    </citation>
    <scope>NUCLEOTIDE SEQUENCE [LARGE SCALE MRNA]</scope>
    <source>
        <tissue>Teratocarcinoma</tissue>
    </source>
</reference>
<reference key="3">
    <citation type="journal article" date="2004" name="Genome Res.">
        <title>The status, quality, and expansion of the NIH full-length cDNA project: the Mammalian Gene Collection (MGC).</title>
        <authorList>
            <consortium name="The MGC Project Team"/>
        </authorList>
    </citation>
    <scope>NUCLEOTIDE SEQUENCE [LARGE SCALE MRNA]</scope>
    <source>
        <tissue>Brain</tissue>
    </source>
</reference>
<reference key="4">
    <citation type="journal article" date="2007" name="J. Cell Biol.">
        <title>Regulation of atrial natriuretic peptide secretion by a novel Ras-like protein.</title>
        <authorList>
            <person name="Rybkin I.I."/>
            <person name="Kim M.S."/>
            <person name="Bezprozvannaya S."/>
            <person name="Qi X."/>
            <person name="Richardson J.A."/>
            <person name="Plato C.F."/>
            <person name="Hill J.A."/>
            <person name="Bassel-Duby R."/>
            <person name="Olson E.N."/>
        </authorList>
    </citation>
    <scope>TISSUE SPECIFICITY</scope>
</reference>
<reference key="5">
    <citation type="journal article" date="2006" name="Science">
        <title>The consensus coding sequences of human breast and colorectal cancers.</title>
        <authorList>
            <person name="Sjoeblom T."/>
            <person name="Jones S."/>
            <person name="Wood L.D."/>
            <person name="Parsons D.W."/>
            <person name="Lin J."/>
            <person name="Barber T.D."/>
            <person name="Mandelker D."/>
            <person name="Leary R.J."/>
            <person name="Ptak J."/>
            <person name="Silliman N."/>
            <person name="Szabo S."/>
            <person name="Buckhaults P."/>
            <person name="Farrell C."/>
            <person name="Meeh P."/>
            <person name="Markowitz S.D."/>
            <person name="Willis J."/>
            <person name="Dawson D."/>
            <person name="Willson J.K.V."/>
            <person name="Gazdar A.F."/>
            <person name="Hartigan J."/>
            <person name="Wu L."/>
            <person name="Liu C."/>
            <person name="Parmigiani G."/>
            <person name="Park B.H."/>
            <person name="Bachman K.E."/>
            <person name="Papadopoulos N."/>
            <person name="Vogelstein B."/>
            <person name="Kinzler K.W."/>
            <person name="Velculescu V.E."/>
        </authorList>
    </citation>
    <scope>VARIANT [LARGE SCALE ANALYSIS] MET-52</scope>
</reference>
<sequence>MVSTYRVAVLGARGVGKSAIVRQFLYNEFSEVCVPTTARRLYLPAVVMNGHVHDLQILDFPPISAFPVNTLQEWADTCCRGLRSVHAYILVYDICCFDSFEYVKTIRQQILETRVIGTSETPIIIVGNKRDLQRGRVIPRWNVSHLVRKTWKCGYVECSAKYNWHILLLFSELLKSVGCARCKHVHAALRFQGALRRNRCAIM</sequence>
<keyword id="KW-1003">Cell membrane</keyword>
<keyword id="KW-0342">GTP-binding</keyword>
<keyword id="KW-0378">Hydrolase</keyword>
<keyword id="KW-0449">Lipoprotein</keyword>
<keyword id="KW-0472">Membrane</keyword>
<keyword id="KW-0488">Methylation</keyword>
<keyword id="KW-0547">Nucleotide-binding</keyword>
<keyword id="KW-0636">Prenylation</keyword>
<keyword id="KW-1267">Proteomics identification</keyword>
<keyword id="KW-1185">Reference proteome</keyword>
<accession>Q96S79</accession>
<accession>B3KV31</accession>
<name>RSLAB_HUMAN</name>
<proteinExistence type="evidence at protein level"/>
<organism>
    <name type="scientific">Homo sapiens</name>
    <name type="common">Human</name>
    <dbReference type="NCBI Taxonomy" id="9606"/>
    <lineage>
        <taxon>Eukaryota</taxon>
        <taxon>Metazoa</taxon>
        <taxon>Chordata</taxon>
        <taxon>Craniata</taxon>
        <taxon>Vertebrata</taxon>
        <taxon>Euteleostomi</taxon>
        <taxon>Mammalia</taxon>
        <taxon>Eutheria</taxon>
        <taxon>Euarchontoglires</taxon>
        <taxon>Primates</taxon>
        <taxon>Haplorrhini</taxon>
        <taxon>Catarrhini</taxon>
        <taxon>Hominidae</taxon>
        <taxon>Homo</taxon>
    </lineage>
</organism>
<dbReference type="EC" id="3.6.5.2" evidence="2"/>
<dbReference type="EMBL" id="AB047296">
    <property type="protein sequence ID" value="BAB60894.1"/>
    <property type="molecule type" value="mRNA"/>
</dbReference>
<dbReference type="EMBL" id="AK122652">
    <property type="protein sequence ID" value="BAG53643.1"/>
    <property type="molecule type" value="mRNA"/>
</dbReference>
<dbReference type="EMBL" id="BC041133">
    <property type="protein sequence ID" value="AAH41133.1"/>
    <property type="molecule type" value="mRNA"/>
</dbReference>
<dbReference type="CCDS" id="CCDS11297.1"/>
<dbReference type="RefSeq" id="NP_201572.1">
    <property type="nucleotide sequence ID" value="NM_033315.4"/>
</dbReference>
<dbReference type="RefSeq" id="XP_016880790.1">
    <property type="nucleotide sequence ID" value="XM_017025301.1"/>
</dbReference>
<dbReference type="SMR" id="Q96S79"/>
<dbReference type="BioGRID" id="124852">
    <property type="interactions" value="62"/>
</dbReference>
<dbReference type="FunCoup" id="Q96S79">
    <property type="interactions" value="617"/>
</dbReference>
<dbReference type="IntAct" id="Q96S79">
    <property type="interactions" value="51"/>
</dbReference>
<dbReference type="MINT" id="Q96S79"/>
<dbReference type="STRING" id="9606.ENSP00000474230"/>
<dbReference type="iPTMnet" id="Q96S79"/>
<dbReference type="PhosphoSitePlus" id="Q96S79"/>
<dbReference type="BioMuta" id="RASL10B"/>
<dbReference type="DMDM" id="74732702"/>
<dbReference type="jPOST" id="Q96S79"/>
<dbReference type="MassIVE" id="Q96S79"/>
<dbReference type="PaxDb" id="9606-ENSP00000474230"/>
<dbReference type="PeptideAtlas" id="Q96S79"/>
<dbReference type="ProteomicsDB" id="78082"/>
<dbReference type="Antibodypedia" id="73077">
    <property type="antibodies" value="60 antibodies from 18 providers"/>
</dbReference>
<dbReference type="DNASU" id="91608"/>
<dbReference type="Ensembl" id="ENST00000603017.2">
    <property type="protein sequence ID" value="ENSP00000474230.1"/>
    <property type="gene ID" value="ENSG00000270885.2"/>
</dbReference>
<dbReference type="GeneID" id="91608"/>
<dbReference type="KEGG" id="hsa:91608"/>
<dbReference type="MANE-Select" id="ENST00000603017.2">
    <property type="protein sequence ID" value="ENSP00000474230.1"/>
    <property type="RefSeq nucleotide sequence ID" value="NM_033315.4"/>
    <property type="RefSeq protein sequence ID" value="NP_201572.1"/>
</dbReference>
<dbReference type="UCSC" id="uc002hju.4">
    <property type="organism name" value="human"/>
</dbReference>
<dbReference type="AGR" id="HGNC:30295"/>
<dbReference type="CTD" id="91608"/>
<dbReference type="DisGeNET" id="91608"/>
<dbReference type="GeneCards" id="RASL10B"/>
<dbReference type="HGNC" id="HGNC:30295">
    <property type="gene designation" value="RASL10B"/>
</dbReference>
<dbReference type="HPA" id="ENSG00000270885">
    <property type="expression patterns" value="Tissue enhanced (brain, skeletal muscle)"/>
</dbReference>
<dbReference type="MIM" id="612128">
    <property type="type" value="gene"/>
</dbReference>
<dbReference type="neXtProt" id="NX_Q96S79"/>
<dbReference type="OpenTargets" id="ENSG00000270885"/>
<dbReference type="PharmGKB" id="PA134936888"/>
<dbReference type="VEuPathDB" id="HostDB:ENSG00000270885"/>
<dbReference type="eggNOG" id="KOG0395">
    <property type="taxonomic scope" value="Eukaryota"/>
</dbReference>
<dbReference type="GeneTree" id="ENSGT00940000160764"/>
<dbReference type="HOGENOM" id="CLU_041217_9_3_1"/>
<dbReference type="InParanoid" id="Q96S79"/>
<dbReference type="OMA" id="IEMEIHI"/>
<dbReference type="OrthoDB" id="299781at2759"/>
<dbReference type="PAN-GO" id="Q96S79">
    <property type="GO annotations" value="0 GO annotations based on evolutionary models"/>
</dbReference>
<dbReference type="PhylomeDB" id="Q96S79"/>
<dbReference type="TreeFam" id="TF325043"/>
<dbReference type="PathwayCommons" id="Q96S79"/>
<dbReference type="SignaLink" id="Q96S79"/>
<dbReference type="BioGRID-ORCS" id="91608">
    <property type="hits" value="11 hits in 1142 CRISPR screens"/>
</dbReference>
<dbReference type="GenomeRNAi" id="91608"/>
<dbReference type="Pharos" id="Q96S79">
    <property type="development level" value="Tdark"/>
</dbReference>
<dbReference type="PRO" id="PR:Q96S79"/>
<dbReference type="Proteomes" id="UP000005640">
    <property type="component" value="Chromosome 17"/>
</dbReference>
<dbReference type="RNAct" id="Q96S79">
    <property type="molecule type" value="protein"/>
</dbReference>
<dbReference type="Bgee" id="ENSG00000270885">
    <property type="expression patterns" value="Expressed in vena cava and 154 other cell types or tissues"/>
</dbReference>
<dbReference type="GO" id="GO:0005886">
    <property type="term" value="C:plasma membrane"/>
    <property type="evidence" value="ECO:0007669"/>
    <property type="project" value="UniProtKB-SubCell"/>
</dbReference>
<dbReference type="GO" id="GO:0003925">
    <property type="term" value="F:G protein activity"/>
    <property type="evidence" value="ECO:0007669"/>
    <property type="project" value="UniProtKB-EC"/>
</dbReference>
<dbReference type="GO" id="GO:0005525">
    <property type="term" value="F:GTP binding"/>
    <property type="evidence" value="ECO:0007669"/>
    <property type="project" value="UniProtKB-KW"/>
</dbReference>
<dbReference type="GO" id="GO:0090277">
    <property type="term" value="P:positive regulation of peptide hormone secretion"/>
    <property type="evidence" value="ECO:0000250"/>
    <property type="project" value="UniProtKB"/>
</dbReference>
<dbReference type="GO" id="GO:0003050">
    <property type="term" value="P:regulation of systemic arterial blood pressure by atrial natriuretic peptide"/>
    <property type="evidence" value="ECO:0000250"/>
    <property type="project" value="UniProtKB"/>
</dbReference>
<dbReference type="CDD" id="cd04142">
    <property type="entry name" value="RRP22"/>
    <property type="match status" value="1"/>
</dbReference>
<dbReference type="FunFam" id="3.40.50.300:FF:000625">
    <property type="entry name" value="Ras-like protein family member 10B"/>
    <property type="match status" value="1"/>
</dbReference>
<dbReference type="Gene3D" id="3.40.50.300">
    <property type="entry name" value="P-loop containing nucleotide triphosphate hydrolases"/>
    <property type="match status" value="1"/>
</dbReference>
<dbReference type="InterPro" id="IPR027417">
    <property type="entry name" value="P-loop_NTPase"/>
</dbReference>
<dbReference type="InterPro" id="IPR052661">
    <property type="entry name" value="Ras-like_GTPase_Reg"/>
</dbReference>
<dbReference type="InterPro" id="IPR001806">
    <property type="entry name" value="Small_GTPase"/>
</dbReference>
<dbReference type="PANTHER" id="PTHR46350">
    <property type="entry name" value="RAS LIKE FAMILY 10 MEMBER B-RELATED"/>
    <property type="match status" value="1"/>
</dbReference>
<dbReference type="PANTHER" id="PTHR46350:SF1">
    <property type="entry name" value="RAS-LIKE PROTEIN FAMILY MEMBER 10B"/>
    <property type="match status" value="1"/>
</dbReference>
<dbReference type="Pfam" id="PF00071">
    <property type="entry name" value="Ras"/>
    <property type="match status" value="1"/>
</dbReference>
<dbReference type="PRINTS" id="PR00449">
    <property type="entry name" value="RASTRNSFRMNG"/>
</dbReference>
<dbReference type="SMART" id="SM00175">
    <property type="entry name" value="RAB"/>
    <property type="match status" value="1"/>
</dbReference>
<dbReference type="SMART" id="SM00173">
    <property type="entry name" value="RAS"/>
    <property type="match status" value="1"/>
</dbReference>
<dbReference type="SUPFAM" id="SSF52540">
    <property type="entry name" value="P-loop containing nucleoside triphosphate hydrolases"/>
    <property type="match status" value="1"/>
</dbReference>
<protein>
    <recommendedName>
        <fullName>Ras-like protein family member 10B</fullName>
        <ecNumber evidence="2">3.6.5.2</ecNumber>
    </recommendedName>
    <alternativeName>
        <fullName>Ras-like protein VTS58635</fullName>
    </alternativeName>
    <alternativeName>
        <fullName>Ras-related protein 17</fullName>
        <shortName>RRP17</shortName>
    </alternativeName>
</protein>
<feature type="chain" id="PRO_0000280800" description="Ras-like protein family member 10B">
    <location>
        <begin position="1"/>
        <end position="200"/>
    </location>
</feature>
<feature type="propeptide" id="PRO_0000281362" description="Removed in mature form" evidence="1">
    <location>
        <begin position="201"/>
        <end position="203"/>
    </location>
</feature>
<feature type="region of interest" description="Small GTPase-like">
    <location>
        <begin position="1"/>
        <end position="203"/>
    </location>
</feature>
<feature type="short sequence motif" description="Effector region">
    <location>
        <begin position="33"/>
        <end position="42"/>
    </location>
</feature>
<feature type="binding site" evidence="1">
    <location>
        <begin position="11"/>
        <end position="18"/>
    </location>
    <ligand>
        <name>GTP</name>
        <dbReference type="ChEBI" id="CHEBI:37565"/>
    </ligand>
</feature>
<feature type="binding site" evidence="1">
    <location>
        <begin position="59"/>
        <end position="62"/>
    </location>
    <ligand>
        <name>GTP</name>
        <dbReference type="ChEBI" id="CHEBI:37565"/>
    </ligand>
</feature>
<feature type="binding site" evidence="1">
    <location>
        <begin position="128"/>
        <end position="131"/>
    </location>
    <ligand>
        <name>GTP</name>
        <dbReference type="ChEBI" id="CHEBI:37565"/>
    </ligand>
</feature>
<feature type="modified residue" description="Cysteine methyl ester" evidence="1">
    <location>
        <position position="200"/>
    </location>
</feature>
<feature type="lipid moiety-binding region" description="S-geranylgeranyl cysteine" evidence="3">
    <location>
        <position position="200"/>
    </location>
</feature>
<feature type="sequence variant" id="VAR_036309" description="In a breast cancer sample; somatic mutation; dbSNP:rs781851443." evidence="4">
    <original>V</original>
    <variation>M</variation>
    <location>
        <position position="52"/>
    </location>
</feature>
<feature type="sequence conflict" description="In Ref. 2; BAG53643." evidence="6" ref="2">
    <original>Q</original>
    <variation>R</variation>
    <location>
        <position position="109"/>
    </location>
</feature>